<proteinExistence type="inferred from homology"/>
<sequence>MELRVIERTDTELRIEVAGEDHTFMNVIKGALLQTDGVAAATYDVNPEQSGGQTEPVLSIQTEPDADVDPLDALGDASRQVQTTVDDFTSAFTAAV</sequence>
<dbReference type="EC" id="2.7.7.6" evidence="1"/>
<dbReference type="EMBL" id="AM180088">
    <property type="protein sequence ID" value="CAJ51824.1"/>
    <property type="molecule type" value="Genomic_DNA"/>
</dbReference>
<dbReference type="RefSeq" id="WP_011570974.1">
    <property type="nucleotide sequence ID" value="NC_008212.1"/>
</dbReference>
<dbReference type="SMR" id="Q18JI2"/>
<dbReference type="STRING" id="362976.HQ_1696A"/>
<dbReference type="GeneID" id="4194641"/>
<dbReference type="KEGG" id="hwa:HQ_1696A"/>
<dbReference type="eggNOG" id="arCOG04111">
    <property type="taxonomic scope" value="Archaea"/>
</dbReference>
<dbReference type="HOGENOM" id="CLU_090381_5_0_2"/>
<dbReference type="Proteomes" id="UP000001975">
    <property type="component" value="Chromosome"/>
</dbReference>
<dbReference type="GO" id="GO:0005737">
    <property type="term" value="C:cytoplasm"/>
    <property type="evidence" value="ECO:0007669"/>
    <property type="project" value="UniProtKB-SubCell"/>
</dbReference>
<dbReference type="GO" id="GO:0000428">
    <property type="term" value="C:DNA-directed RNA polymerase complex"/>
    <property type="evidence" value="ECO:0007669"/>
    <property type="project" value="UniProtKB-KW"/>
</dbReference>
<dbReference type="GO" id="GO:0003677">
    <property type="term" value="F:DNA binding"/>
    <property type="evidence" value="ECO:0007669"/>
    <property type="project" value="InterPro"/>
</dbReference>
<dbReference type="GO" id="GO:0003899">
    <property type="term" value="F:DNA-directed RNA polymerase activity"/>
    <property type="evidence" value="ECO:0007669"/>
    <property type="project" value="UniProtKB-UniRule"/>
</dbReference>
<dbReference type="GO" id="GO:0046983">
    <property type="term" value="F:protein dimerization activity"/>
    <property type="evidence" value="ECO:0007669"/>
    <property type="project" value="InterPro"/>
</dbReference>
<dbReference type="GO" id="GO:0006351">
    <property type="term" value="P:DNA-templated transcription"/>
    <property type="evidence" value="ECO:0007669"/>
    <property type="project" value="UniProtKB-UniRule"/>
</dbReference>
<dbReference type="CDD" id="cd06927">
    <property type="entry name" value="RNAP_L"/>
    <property type="match status" value="1"/>
</dbReference>
<dbReference type="Gene3D" id="3.30.1360.10">
    <property type="entry name" value="RNA polymerase, RBP11-like subunit"/>
    <property type="match status" value="1"/>
</dbReference>
<dbReference type="HAMAP" id="MF_00261">
    <property type="entry name" value="RNApol_arch_Rpo11"/>
    <property type="match status" value="1"/>
</dbReference>
<dbReference type="InterPro" id="IPR036603">
    <property type="entry name" value="RBP11-like"/>
</dbReference>
<dbReference type="InterPro" id="IPR009025">
    <property type="entry name" value="RBP11-like_dimer"/>
</dbReference>
<dbReference type="InterPro" id="IPR008193">
    <property type="entry name" value="RNA_pol_Rpb11_13-16kDa_CS"/>
</dbReference>
<dbReference type="InterPro" id="IPR022905">
    <property type="entry name" value="Rpo11-like"/>
</dbReference>
<dbReference type="NCBIfam" id="NF002236">
    <property type="entry name" value="PRK01146.1-5"/>
    <property type="match status" value="1"/>
</dbReference>
<dbReference type="Pfam" id="PF13656">
    <property type="entry name" value="RNA_pol_L_2"/>
    <property type="match status" value="1"/>
</dbReference>
<dbReference type="SUPFAM" id="SSF55257">
    <property type="entry name" value="RBP11-like subunits of RNA polymerase"/>
    <property type="match status" value="1"/>
</dbReference>
<dbReference type="PROSITE" id="PS01154">
    <property type="entry name" value="RNA_POL_L_13KD"/>
    <property type="match status" value="1"/>
</dbReference>
<evidence type="ECO:0000255" key="1">
    <source>
        <dbReference type="HAMAP-Rule" id="MF_00261"/>
    </source>
</evidence>
<organism>
    <name type="scientific">Haloquadratum walsbyi (strain DSM 16790 / HBSQ001)</name>
    <dbReference type="NCBI Taxonomy" id="362976"/>
    <lineage>
        <taxon>Archaea</taxon>
        <taxon>Methanobacteriati</taxon>
        <taxon>Methanobacteriota</taxon>
        <taxon>Stenosarchaea group</taxon>
        <taxon>Halobacteria</taxon>
        <taxon>Halobacteriales</taxon>
        <taxon>Haloferacaceae</taxon>
        <taxon>Haloquadratum</taxon>
    </lineage>
</organism>
<accession>Q18JI2</accession>
<gene>
    <name evidence="1" type="primary">rpo11</name>
    <name evidence="1" type="synonym">rpoL</name>
    <name type="ordered locus">HQ_1696A</name>
</gene>
<name>RPO11_HALWD</name>
<reference key="1">
    <citation type="journal article" date="2006" name="BMC Genomics">
        <title>The genome of the square archaeon Haloquadratum walsbyi: life at the limits of water activity.</title>
        <authorList>
            <person name="Bolhuis H."/>
            <person name="Palm P."/>
            <person name="Wende A."/>
            <person name="Falb M."/>
            <person name="Rampp M."/>
            <person name="Rodriguez-Valera F."/>
            <person name="Pfeiffer F."/>
            <person name="Oesterhelt D."/>
        </authorList>
    </citation>
    <scope>NUCLEOTIDE SEQUENCE [LARGE SCALE GENOMIC DNA]</scope>
    <source>
        <strain>DSM 16790 / HBSQ001</strain>
    </source>
</reference>
<feature type="chain" id="PRO_1000005780" description="DNA-directed RNA polymerase subunit Rpo11">
    <location>
        <begin position="1"/>
        <end position="96"/>
    </location>
</feature>
<comment type="function">
    <text evidence="1">DNA-dependent RNA polymerase (RNAP) catalyzes the transcription of DNA into RNA using the four ribonucleoside triphosphates as substrates.</text>
</comment>
<comment type="catalytic activity">
    <reaction evidence="1">
        <text>RNA(n) + a ribonucleoside 5'-triphosphate = RNA(n+1) + diphosphate</text>
        <dbReference type="Rhea" id="RHEA:21248"/>
        <dbReference type="Rhea" id="RHEA-COMP:14527"/>
        <dbReference type="Rhea" id="RHEA-COMP:17342"/>
        <dbReference type="ChEBI" id="CHEBI:33019"/>
        <dbReference type="ChEBI" id="CHEBI:61557"/>
        <dbReference type="ChEBI" id="CHEBI:140395"/>
        <dbReference type="EC" id="2.7.7.6"/>
    </reaction>
</comment>
<comment type="subunit">
    <text evidence="1">Part of the RNA polymerase complex.</text>
</comment>
<comment type="subcellular location">
    <subcellularLocation>
        <location evidence="1">Cytoplasm</location>
    </subcellularLocation>
</comment>
<comment type="similarity">
    <text evidence="1">Belongs to the archaeal Rpo11/eukaryotic RPB11/RPC19 RNA polymerase subunit family.</text>
</comment>
<protein>
    <recommendedName>
        <fullName evidence="1">DNA-directed RNA polymerase subunit Rpo11</fullName>
        <ecNumber evidence="1">2.7.7.6</ecNumber>
    </recommendedName>
    <alternativeName>
        <fullName evidence="1">DNA-directed RNA polymerase subunit L</fullName>
    </alternativeName>
</protein>
<keyword id="KW-0963">Cytoplasm</keyword>
<keyword id="KW-0240">DNA-directed RNA polymerase</keyword>
<keyword id="KW-0548">Nucleotidyltransferase</keyword>
<keyword id="KW-1185">Reference proteome</keyword>
<keyword id="KW-0804">Transcription</keyword>
<keyword id="KW-0808">Transferase</keyword>